<proteinExistence type="inferred from homology"/>
<accession>A4SGV9</accession>
<organism>
    <name type="scientific">Chlorobium phaeovibrioides (strain DSM 265 / 1930)</name>
    <name type="common">Prosthecochloris vibrioformis (strain DSM 265)</name>
    <dbReference type="NCBI Taxonomy" id="290318"/>
    <lineage>
        <taxon>Bacteria</taxon>
        <taxon>Pseudomonadati</taxon>
        <taxon>Chlorobiota</taxon>
        <taxon>Chlorobiia</taxon>
        <taxon>Chlorobiales</taxon>
        <taxon>Chlorobiaceae</taxon>
        <taxon>Chlorobium/Pelodictyon group</taxon>
        <taxon>Chlorobium</taxon>
    </lineage>
</organism>
<evidence type="ECO:0000255" key="1">
    <source>
        <dbReference type="HAMAP-Rule" id="MF_00835"/>
    </source>
</evidence>
<comment type="function">
    <text evidence="1">Converts the free carboxyl group of a malonyl-thioester to its methyl ester by transfer of a methyl group from S-adenosyl-L-methionine (SAM). It allows to synthesize pimeloyl-ACP via the fatty acid synthetic pathway.</text>
</comment>
<comment type="catalytic activity">
    <reaction evidence="1">
        <text>malonyl-[ACP] + S-adenosyl-L-methionine = malonyl-[ACP] methyl ester + S-adenosyl-L-homocysteine</text>
        <dbReference type="Rhea" id="RHEA:17105"/>
        <dbReference type="Rhea" id="RHEA-COMP:9623"/>
        <dbReference type="Rhea" id="RHEA-COMP:9954"/>
        <dbReference type="ChEBI" id="CHEBI:57856"/>
        <dbReference type="ChEBI" id="CHEBI:59789"/>
        <dbReference type="ChEBI" id="CHEBI:78449"/>
        <dbReference type="ChEBI" id="CHEBI:78845"/>
        <dbReference type="EC" id="2.1.1.197"/>
    </reaction>
</comment>
<comment type="pathway">
    <text evidence="1">Cofactor biosynthesis; biotin biosynthesis.</text>
</comment>
<comment type="similarity">
    <text evidence="1">Belongs to the methyltransferase superfamily.</text>
</comment>
<gene>
    <name evidence="1" type="primary">bioC</name>
    <name type="ordered locus">Cvib_1708</name>
</gene>
<dbReference type="EC" id="2.1.1.197" evidence="1"/>
<dbReference type="EMBL" id="CP000607">
    <property type="protein sequence ID" value="ABP37718.1"/>
    <property type="molecule type" value="Genomic_DNA"/>
</dbReference>
<dbReference type="SMR" id="A4SGV9"/>
<dbReference type="STRING" id="290318.Cvib_1708"/>
<dbReference type="KEGG" id="pvi:Cvib_1708"/>
<dbReference type="eggNOG" id="COG4106">
    <property type="taxonomic scope" value="Bacteria"/>
</dbReference>
<dbReference type="HOGENOM" id="CLU_046586_1_0_10"/>
<dbReference type="OrthoDB" id="9760689at2"/>
<dbReference type="UniPathway" id="UPA00078"/>
<dbReference type="GO" id="GO:0010340">
    <property type="term" value="F:carboxyl-O-methyltransferase activity"/>
    <property type="evidence" value="ECO:0007669"/>
    <property type="project" value="UniProtKB-UniRule"/>
</dbReference>
<dbReference type="GO" id="GO:0102130">
    <property type="term" value="F:malonyl-CoA methyltransferase activity"/>
    <property type="evidence" value="ECO:0007669"/>
    <property type="project" value="UniProtKB-EC"/>
</dbReference>
<dbReference type="GO" id="GO:0008757">
    <property type="term" value="F:S-adenosylmethionine-dependent methyltransferase activity"/>
    <property type="evidence" value="ECO:0007669"/>
    <property type="project" value="InterPro"/>
</dbReference>
<dbReference type="GO" id="GO:0009102">
    <property type="term" value="P:biotin biosynthetic process"/>
    <property type="evidence" value="ECO:0007669"/>
    <property type="project" value="UniProtKB-UniRule"/>
</dbReference>
<dbReference type="GO" id="GO:0032259">
    <property type="term" value="P:methylation"/>
    <property type="evidence" value="ECO:0007669"/>
    <property type="project" value="UniProtKB-KW"/>
</dbReference>
<dbReference type="CDD" id="cd02440">
    <property type="entry name" value="AdoMet_MTases"/>
    <property type="match status" value="1"/>
</dbReference>
<dbReference type="Gene3D" id="3.40.50.150">
    <property type="entry name" value="Vaccinia Virus protein VP39"/>
    <property type="match status" value="1"/>
</dbReference>
<dbReference type="HAMAP" id="MF_00835">
    <property type="entry name" value="BioC"/>
    <property type="match status" value="1"/>
</dbReference>
<dbReference type="InterPro" id="IPR011814">
    <property type="entry name" value="BioC"/>
</dbReference>
<dbReference type="InterPro" id="IPR013216">
    <property type="entry name" value="Methyltransf_11"/>
</dbReference>
<dbReference type="InterPro" id="IPR029063">
    <property type="entry name" value="SAM-dependent_MTases_sf"/>
</dbReference>
<dbReference type="NCBIfam" id="TIGR02072">
    <property type="entry name" value="BioC"/>
    <property type="match status" value="1"/>
</dbReference>
<dbReference type="PANTHER" id="PTHR43861:SF1">
    <property type="entry name" value="TRANS-ACONITATE 2-METHYLTRANSFERASE"/>
    <property type="match status" value="1"/>
</dbReference>
<dbReference type="PANTHER" id="PTHR43861">
    <property type="entry name" value="TRANS-ACONITATE 2-METHYLTRANSFERASE-RELATED"/>
    <property type="match status" value="1"/>
</dbReference>
<dbReference type="Pfam" id="PF08241">
    <property type="entry name" value="Methyltransf_11"/>
    <property type="match status" value="1"/>
</dbReference>
<dbReference type="SUPFAM" id="SSF53335">
    <property type="entry name" value="S-adenosyl-L-methionine-dependent methyltransferases"/>
    <property type="match status" value="1"/>
</dbReference>
<feature type="chain" id="PRO_0000412519" description="Malonyl-[acyl-carrier protein] O-methyltransferase">
    <location>
        <begin position="1"/>
        <end position="260"/>
    </location>
</feature>
<name>BIOC_CHLPM</name>
<sequence length="260" mass="29150">MSGVKDKMLVGERFRRALCSYPESAVVQEAMARELVSMVRLHAGEERLGRVLEIGAGSGLLTELLLEAFPVASLTANDLVGECREPLREIARRLRIAEFSFLKGDIEECGELPGSQDLVVSNATLQWLNDLDKLFAAVRRSLVPGKLFAFTSFTVGNMEEIAMLGGGGLSYRTTEEIGEIAGRHFELLELKESREQLTFSSPREVLGHIRQTGVNGLGGERWSRSRYLDFMENYSRLFRVQGGVSLTYRPLYCVLRRREL</sequence>
<protein>
    <recommendedName>
        <fullName evidence="1">Malonyl-[acyl-carrier protein] O-methyltransferase</fullName>
        <shortName evidence="1">Malonyl-ACP O-methyltransferase</shortName>
        <ecNumber evidence="1">2.1.1.197</ecNumber>
    </recommendedName>
    <alternativeName>
        <fullName evidence="1">Biotin synthesis protein BioC</fullName>
    </alternativeName>
</protein>
<keyword id="KW-0093">Biotin biosynthesis</keyword>
<keyword id="KW-0489">Methyltransferase</keyword>
<keyword id="KW-0949">S-adenosyl-L-methionine</keyword>
<keyword id="KW-0808">Transferase</keyword>
<reference key="1">
    <citation type="submission" date="2007-03" db="EMBL/GenBank/DDBJ databases">
        <title>Complete sequence of Prosthecochloris vibrioformis DSM 265.</title>
        <authorList>
            <consortium name="US DOE Joint Genome Institute"/>
            <person name="Copeland A."/>
            <person name="Lucas S."/>
            <person name="Lapidus A."/>
            <person name="Barry K."/>
            <person name="Detter J.C."/>
            <person name="Glavina del Rio T."/>
            <person name="Hammon N."/>
            <person name="Israni S."/>
            <person name="Pitluck S."/>
            <person name="Schmutz J."/>
            <person name="Larimer F."/>
            <person name="Land M."/>
            <person name="Hauser L."/>
            <person name="Mikhailova N."/>
            <person name="Li T."/>
            <person name="Overmann J."/>
            <person name="Schuster S.C."/>
            <person name="Bryant D.A."/>
            <person name="Richardson P."/>
        </authorList>
    </citation>
    <scope>NUCLEOTIDE SEQUENCE [LARGE SCALE GENOMIC DNA]</scope>
    <source>
        <strain>DSM 265 / 1930</strain>
    </source>
</reference>